<reference key="1">
    <citation type="journal article" date="1999" name="Nature">
        <title>Sequence and analysis of chromosome 4 of the plant Arabidopsis thaliana.</title>
        <authorList>
            <person name="Mayer K.F.X."/>
            <person name="Schueller C."/>
            <person name="Wambutt R."/>
            <person name="Murphy G."/>
            <person name="Volckaert G."/>
            <person name="Pohl T."/>
            <person name="Duesterhoeft A."/>
            <person name="Stiekema W."/>
            <person name="Entian K.-D."/>
            <person name="Terryn N."/>
            <person name="Harris B."/>
            <person name="Ansorge W."/>
            <person name="Brandt P."/>
            <person name="Grivell L.A."/>
            <person name="Rieger M."/>
            <person name="Weichselgartner M."/>
            <person name="de Simone V."/>
            <person name="Obermaier B."/>
            <person name="Mache R."/>
            <person name="Mueller M."/>
            <person name="Kreis M."/>
            <person name="Delseny M."/>
            <person name="Puigdomenech P."/>
            <person name="Watson M."/>
            <person name="Schmidtheini T."/>
            <person name="Reichert B."/>
            <person name="Portetelle D."/>
            <person name="Perez-Alonso M."/>
            <person name="Boutry M."/>
            <person name="Bancroft I."/>
            <person name="Vos P."/>
            <person name="Hoheisel J."/>
            <person name="Zimmermann W."/>
            <person name="Wedler H."/>
            <person name="Ridley P."/>
            <person name="Langham S.-A."/>
            <person name="McCullagh B."/>
            <person name="Bilham L."/>
            <person name="Robben J."/>
            <person name="van der Schueren J."/>
            <person name="Grymonprez B."/>
            <person name="Chuang Y.-J."/>
            <person name="Vandenbussche F."/>
            <person name="Braeken M."/>
            <person name="Weltjens I."/>
            <person name="Voet M."/>
            <person name="Bastiaens I."/>
            <person name="Aert R."/>
            <person name="Defoor E."/>
            <person name="Weitzenegger T."/>
            <person name="Bothe G."/>
            <person name="Ramsperger U."/>
            <person name="Hilbert H."/>
            <person name="Braun M."/>
            <person name="Holzer E."/>
            <person name="Brandt A."/>
            <person name="Peters S."/>
            <person name="van Staveren M."/>
            <person name="Dirkse W."/>
            <person name="Mooijman P."/>
            <person name="Klein Lankhorst R."/>
            <person name="Rose M."/>
            <person name="Hauf J."/>
            <person name="Koetter P."/>
            <person name="Berneiser S."/>
            <person name="Hempel S."/>
            <person name="Feldpausch M."/>
            <person name="Lamberth S."/>
            <person name="Van den Daele H."/>
            <person name="De Keyser A."/>
            <person name="Buysshaert C."/>
            <person name="Gielen J."/>
            <person name="Villarroel R."/>
            <person name="De Clercq R."/>
            <person name="van Montagu M."/>
            <person name="Rogers J."/>
            <person name="Cronin A."/>
            <person name="Quail M.A."/>
            <person name="Bray-Allen S."/>
            <person name="Clark L."/>
            <person name="Doggett J."/>
            <person name="Hall S."/>
            <person name="Kay M."/>
            <person name="Lennard N."/>
            <person name="McLay K."/>
            <person name="Mayes R."/>
            <person name="Pettett A."/>
            <person name="Rajandream M.A."/>
            <person name="Lyne M."/>
            <person name="Benes V."/>
            <person name="Rechmann S."/>
            <person name="Borkova D."/>
            <person name="Bloecker H."/>
            <person name="Scharfe M."/>
            <person name="Grimm M."/>
            <person name="Loehnert T.-H."/>
            <person name="Dose S."/>
            <person name="de Haan M."/>
            <person name="Maarse A.C."/>
            <person name="Schaefer M."/>
            <person name="Mueller-Auer S."/>
            <person name="Gabel C."/>
            <person name="Fuchs M."/>
            <person name="Fartmann B."/>
            <person name="Granderath K."/>
            <person name="Dauner D."/>
            <person name="Herzl A."/>
            <person name="Neumann S."/>
            <person name="Argiriou A."/>
            <person name="Vitale D."/>
            <person name="Liguori R."/>
            <person name="Piravandi E."/>
            <person name="Massenet O."/>
            <person name="Quigley F."/>
            <person name="Clabauld G."/>
            <person name="Muendlein A."/>
            <person name="Felber R."/>
            <person name="Schnabl S."/>
            <person name="Hiller R."/>
            <person name="Schmidt W."/>
            <person name="Lecharny A."/>
            <person name="Aubourg S."/>
            <person name="Chefdor F."/>
            <person name="Cooke R."/>
            <person name="Berger C."/>
            <person name="Monfort A."/>
            <person name="Casacuberta E."/>
            <person name="Gibbons T."/>
            <person name="Weber N."/>
            <person name="Vandenbol M."/>
            <person name="Bargues M."/>
            <person name="Terol J."/>
            <person name="Torres A."/>
            <person name="Perez-Perez A."/>
            <person name="Purnelle B."/>
            <person name="Bent E."/>
            <person name="Johnson S."/>
            <person name="Tacon D."/>
            <person name="Jesse T."/>
            <person name="Heijnen L."/>
            <person name="Schwarz S."/>
            <person name="Scholler P."/>
            <person name="Heber S."/>
            <person name="Francs P."/>
            <person name="Bielke C."/>
            <person name="Frishman D."/>
            <person name="Haase D."/>
            <person name="Lemcke K."/>
            <person name="Mewes H.-W."/>
            <person name="Stocker S."/>
            <person name="Zaccaria P."/>
            <person name="Bevan M."/>
            <person name="Wilson R.K."/>
            <person name="de la Bastide M."/>
            <person name="Habermann K."/>
            <person name="Parnell L."/>
            <person name="Dedhia N."/>
            <person name="Gnoj L."/>
            <person name="Schutz K."/>
            <person name="Huang E."/>
            <person name="Spiegel L."/>
            <person name="Sekhon M."/>
            <person name="Murray J."/>
            <person name="Sheet P."/>
            <person name="Cordes M."/>
            <person name="Abu-Threideh J."/>
            <person name="Stoneking T."/>
            <person name="Kalicki J."/>
            <person name="Graves T."/>
            <person name="Harmon G."/>
            <person name="Edwards J."/>
            <person name="Latreille P."/>
            <person name="Courtney L."/>
            <person name="Cloud J."/>
            <person name="Abbott A."/>
            <person name="Scott K."/>
            <person name="Johnson D."/>
            <person name="Minx P."/>
            <person name="Bentley D."/>
            <person name="Fulton B."/>
            <person name="Miller N."/>
            <person name="Greco T."/>
            <person name="Kemp K."/>
            <person name="Kramer J."/>
            <person name="Fulton L."/>
            <person name="Mardis E."/>
            <person name="Dante M."/>
            <person name="Pepin K."/>
            <person name="Hillier L.W."/>
            <person name="Nelson J."/>
            <person name="Spieth J."/>
            <person name="Ryan E."/>
            <person name="Andrews S."/>
            <person name="Geisel C."/>
            <person name="Layman D."/>
            <person name="Du H."/>
            <person name="Ali J."/>
            <person name="Berghoff A."/>
            <person name="Jones K."/>
            <person name="Drone K."/>
            <person name="Cotton M."/>
            <person name="Joshu C."/>
            <person name="Antonoiu B."/>
            <person name="Zidanic M."/>
            <person name="Strong C."/>
            <person name="Sun H."/>
            <person name="Lamar B."/>
            <person name="Yordan C."/>
            <person name="Ma P."/>
            <person name="Zhong J."/>
            <person name="Preston R."/>
            <person name="Vil D."/>
            <person name="Shekher M."/>
            <person name="Matero A."/>
            <person name="Shah R."/>
            <person name="Swaby I.K."/>
            <person name="O'Shaughnessy A."/>
            <person name="Rodriguez M."/>
            <person name="Hoffman J."/>
            <person name="Till S."/>
            <person name="Granat S."/>
            <person name="Shohdy N."/>
            <person name="Hasegawa A."/>
            <person name="Hameed A."/>
            <person name="Lodhi M."/>
            <person name="Johnson A."/>
            <person name="Chen E."/>
            <person name="Marra M.A."/>
            <person name="Martienssen R."/>
            <person name="McCombie W.R."/>
        </authorList>
    </citation>
    <scope>NUCLEOTIDE SEQUENCE [LARGE SCALE GENOMIC DNA]</scope>
    <source>
        <strain>cv. Columbia</strain>
    </source>
</reference>
<reference key="2">
    <citation type="journal article" date="2017" name="Plant J.">
        <title>Araport11: a complete reannotation of the Arabidopsis thaliana reference genome.</title>
        <authorList>
            <person name="Cheng C.Y."/>
            <person name="Krishnakumar V."/>
            <person name="Chan A.P."/>
            <person name="Thibaud-Nissen F."/>
            <person name="Schobel S."/>
            <person name="Town C.D."/>
        </authorList>
    </citation>
    <scope>GENOME REANNOTATION</scope>
    <source>
        <strain>cv. Columbia</strain>
    </source>
</reference>
<reference key="3">
    <citation type="journal article" date="2002" name="Mol. Genet. Genomics">
        <title>Genomic analysis of the terpenoid synthase (AtTPS) gene family of Arabidopsis thaliana.</title>
        <authorList>
            <person name="Aubourg S."/>
            <person name="Lecharny A."/>
            <person name="Bohlmann J."/>
        </authorList>
    </citation>
    <scope>GENE FAMILY</scope>
    <scope>NOMENCLATURE</scope>
</reference>
<reference key="4">
    <citation type="journal article" date="2003" name="Plant Mol. Biol.">
        <title>Genome organization in Arabidopsis thaliana: a survey for genes involved in isoprenoid and chlorophyll metabolism.</title>
        <authorList>
            <person name="Lange B.M."/>
            <person name="Ghassemian M."/>
        </authorList>
    </citation>
    <scope>GENE FAMILY</scope>
</reference>
<reference key="5">
    <citation type="journal article" date="2013" name="Plant Cell">
        <title>Formation of the unusual semivolatile diterpene rhizathalene by the Arabidopsis class I terpene synthase TPS08 in the root stele is involved in defense against belowground herbivory.</title>
        <authorList>
            <person name="Vaughan M.M."/>
            <person name="Wang Q."/>
            <person name="Webster F.X."/>
            <person name="Kiemle D."/>
            <person name="Hong Y.J."/>
            <person name="Tantillo D.J."/>
            <person name="Coates R.M."/>
            <person name="Wray A.T."/>
            <person name="Askew W."/>
            <person name="O'Donnell C."/>
            <person name="Tokuhisa J.G."/>
            <person name="Tholl D."/>
        </authorList>
    </citation>
    <scope>FUNCTION</scope>
    <scope>CATALYTIC ACTIVITY</scope>
    <scope>BIOPHYSICOCHEMICAL PROPERTIES</scope>
    <scope>SUBCELLULAR LOCATION</scope>
    <scope>TISSUE SPECIFICITY</scope>
</reference>
<keyword id="KW-0456">Lyase</keyword>
<keyword id="KW-0460">Magnesium</keyword>
<keyword id="KW-0464">Manganese</keyword>
<keyword id="KW-0479">Metal-binding</keyword>
<keyword id="KW-0934">Plastid</keyword>
<keyword id="KW-1185">Reference proteome</keyword>
<name>TPS08_ARATH</name>
<accession>O65435</accession>
<dbReference type="EC" id="4.2.3.195"/>
<dbReference type="EMBL" id="AL022224">
    <property type="protein sequence ID" value="CAA18246.1"/>
    <property type="status" value="ALT_SEQ"/>
    <property type="molecule type" value="Genomic_DNA"/>
</dbReference>
<dbReference type="EMBL" id="AL161552">
    <property type="protein sequence ID" value="CAB79021.1"/>
    <property type="status" value="ALT_SEQ"/>
    <property type="molecule type" value="Genomic_DNA"/>
</dbReference>
<dbReference type="EMBL" id="CP002687">
    <property type="protein sequence ID" value="AEE84285.1"/>
    <property type="molecule type" value="Genomic_DNA"/>
</dbReference>
<dbReference type="PIR" id="T05329">
    <property type="entry name" value="T05329"/>
</dbReference>
<dbReference type="RefSeq" id="NP_193754.2">
    <property type="nucleotide sequence ID" value="NM_118140.3"/>
</dbReference>
<dbReference type="SMR" id="O65435"/>
<dbReference type="FunCoup" id="O65435">
    <property type="interactions" value="53"/>
</dbReference>
<dbReference type="STRING" id="3702.O65435"/>
<dbReference type="PaxDb" id="3702-AT4G20210.1"/>
<dbReference type="ProteomicsDB" id="232492"/>
<dbReference type="EnsemblPlants" id="AT4G20210.1">
    <property type="protein sequence ID" value="AT4G20210.1"/>
    <property type="gene ID" value="AT4G20210"/>
</dbReference>
<dbReference type="GeneID" id="827768"/>
<dbReference type="Gramene" id="AT4G20210.1">
    <property type="protein sequence ID" value="AT4G20210.1"/>
    <property type="gene ID" value="AT4G20210"/>
</dbReference>
<dbReference type="KEGG" id="ath:AT4G20210"/>
<dbReference type="Araport" id="AT4G20210"/>
<dbReference type="TAIR" id="AT4G20210">
    <property type="gene designation" value="TPS08"/>
</dbReference>
<dbReference type="eggNOG" id="ENOG502SHPY">
    <property type="taxonomic scope" value="Eukaryota"/>
</dbReference>
<dbReference type="HOGENOM" id="CLU_003125_7_2_1"/>
<dbReference type="InParanoid" id="O65435"/>
<dbReference type="OMA" id="MIANEHD"/>
<dbReference type="BRENDA" id="4.2.3.195">
    <property type="organism ID" value="399"/>
</dbReference>
<dbReference type="UniPathway" id="UPA00213"/>
<dbReference type="PRO" id="PR:O65435"/>
<dbReference type="Proteomes" id="UP000006548">
    <property type="component" value="Chromosome 4"/>
</dbReference>
<dbReference type="ExpressionAtlas" id="O65435">
    <property type="expression patterns" value="baseline and differential"/>
</dbReference>
<dbReference type="GO" id="GO:0009536">
    <property type="term" value="C:plastid"/>
    <property type="evidence" value="ECO:0007669"/>
    <property type="project" value="UniProtKB-SubCell"/>
</dbReference>
<dbReference type="GO" id="GO:0000287">
    <property type="term" value="F:magnesium ion binding"/>
    <property type="evidence" value="ECO:0007669"/>
    <property type="project" value="InterPro"/>
</dbReference>
<dbReference type="GO" id="GO:0010333">
    <property type="term" value="F:terpene synthase activity"/>
    <property type="evidence" value="ECO:0007669"/>
    <property type="project" value="InterPro"/>
</dbReference>
<dbReference type="GO" id="GO:0016102">
    <property type="term" value="P:diterpenoid biosynthetic process"/>
    <property type="evidence" value="ECO:0007669"/>
    <property type="project" value="InterPro"/>
</dbReference>
<dbReference type="CDD" id="cd00684">
    <property type="entry name" value="Terpene_cyclase_plant_C1"/>
    <property type="match status" value="1"/>
</dbReference>
<dbReference type="FunFam" id="1.10.600.10:FF:000007">
    <property type="entry name" value="Isoprene synthase, chloroplastic"/>
    <property type="match status" value="1"/>
</dbReference>
<dbReference type="FunFam" id="1.50.10.130:FF:000001">
    <property type="entry name" value="Isoprene synthase, chloroplastic"/>
    <property type="match status" value="1"/>
</dbReference>
<dbReference type="Gene3D" id="1.10.600.10">
    <property type="entry name" value="Farnesyl Diphosphate Synthase"/>
    <property type="match status" value="1"/>
</dbReference>
<dbReference type="Gene3D" id="1.50.10.130">
    <property type="entry name" value="Terpene synthase, N-terminal domain"/>
    <property type="match status" value="1"/>
</dbReference>
<dbReference type="InterPro" id="IPR008949">
    <property type="entry name" value="Isoprenoid_synthase_dom_sf"/>
</dbReference>
<dbReference type="InterPro" id="IPR044814">
    <property type="entry name" value="Terpene_cyclase_plant_C1"/>
</dbReference>
<dbReference type="InterPro" id="IPR001906">
    <property type="entry name" value="Terpene_synth_N"/>
</dbReference>
<dbReference type="InterPro" id="IPR036965">
    <property type="entry name" value="Terpene_synth_N_sf"/>
</dbReference>
<dbReference type="InterPro" id="IPR050148">
    <property type="entry name" value="Terpene_synthase-like"/>
</dbReference>
<dbReference type="InterPro" id="IPR005630">
    <property type="entry name" value="Terpene_synthase_metal-bd"/>
</dbReference>
<dbReference type="InterPro" id="IPR008930">
    <property type="entry name" value="Terpenoid_cyclase/PrenylTrfase"/>
</dbReference>
<dbReference type="PANTHER" id="PTHR31225">
    <property type="entry name" value="OS04G0344100 PROTEIN-RELATED"/>
    <property type="match status" value="1"/>
</dbReference>
<dbReference type="PANTHER" id="PTHR31225:SF242">
    <property type="entry name" value="TERPENOID SYNTHASE 9"/>
    <property type="match status" value="1"/>
</dbReference>
<dbReference type="Pfam" id="PF01397">
    <property type="entry name" value="Terpene_synth"/>
    <property type="match status" value="1"/>
</dbReference>
<dbReference type="Pfam" id="PF03936">
    <property type="entry name" value="Terpene_synth_C"/>
    <property type="match status" value="1"/>
</dbReference>
<dbReference type="SUPFAM" id="SSF48239">
    <property type="entry name" value="Terpenoid cyclases/Protein prenyltransferases"/>
    <property type="match status" value="1"/>
</dbReference>
<dbReference type="SUPFAM" id="SSF48576">
    <property type="entry name" value="Terpenoid synthases"/>
    <property type="match status" value="1"/>
</dbReference>
<comment type="function">
    <text evidence="2">Catalyzes the synthesis of the semivolatile diterpene rhizatalene A.</text>
</comment>
<comment type="catalytic activity">
    <reaction evidence="2">
        <text>(2E,6E,10E)-geranylgeranyl diphosphate = rhizathalene A + diphosphate</text>
        <dbReference type="Rhea" id="RHEA:55216"/>
        <dbReference type="ChEBI" id="CHEBI:33019"/>
        <dbReference type="ChEBI" id="CHEBI:58756"/>
        <dbReference type="ChEBI" id="CHEBI:138656"/>
        <dbReference type="EC" id="4.2.3.195"/>
    </reaction>
</comment>
<comment type="cofactor">
    <cofactor evidence="1">
        <name>Mg(2+)</name>
        <dbReference type="ChEBI" id="CHEBI:18420"/>
    </cofactor>
    <cofactor evidence="1">
        <name>Mn(2+)</name>
        <dbReference type="ChEBI" id="CHEBI:29035"/>
    </cofactor>
    <text evidence="1">Binds 3 Mg(2+) or Mn(2+) ions per subunit.</text>
</comment>
<comment type="biophysicochemical properties">
    <kinetics>
        <KM evidence="2">0.8 uM for geranylgeranyl diphosphate</KM>
        <Vmax evidence="2">4.6 pmol/sec/mg enzyme</Vmax>
        <text evidence="2">kcat is 0.0003 sec(-1).</text>
    </kinetics>
</comment>
<comment type="pathway">
    <text>Secondary metabolite biosynthesis; terpenoid biosynthesis.</text>
</comment>
<comment type="subcellular location">
    <subcellularLocation>
        <location evidence="2">Plastid</location>
    </subcellularLocation>
</comment>
<comment type="tissue specificity">
    <text evidence="2">Stele, and tips of primary and secondary root.</text>
</comment>
<comment type="domain">
    <text>The Asp-Asp-Xaa-Xaa-Asp/Glu (DDXXD/E) motif is important for the catalytic activity, presumably through binding to Mg(2+).</text>
</comment>
<comment type="similarity">
    <text evidence="3">Belongs to the terpene synthase family. Tpsa subfamily.</text>
</comment>
<comment type="sequence caution" evidence="3">
    <conflict type="erroneous gene model prediction">
        <sequence resource="EMBL-CDS" id="CAA18246"/>
    </conflict>
</comment>
<comment type="sequence caution" evidence="3">
    <conflict type="erroneous gene model prediction">
        <sequence resource="EMBL-CDS" id="CAB79021"/>
    </conflict>
</comment>
<feature type="chain" id="PRO_0000403704" description="Terpenoid synthase 8">
    <location>
        <begin position="1"/>
        <end position="600"/>
    </location>
</feature>
<feature type="short sequence motif" description="DDXXD motif">
    <location>
        <begin position="352"/>
        <end position="356"/>
    </location>
</feature>
<feature type="binding site" evidence="1">
    <location>
        <position position="352"/>
    </location>
    <ligand>
        <name>Mg(2+)</name>
        <dbReference type="ChEBI" id="CHEBI:18420"/>
        <label>1</label>
    </ligand>
</feature>
<feature type="binding site" evidence="1">
    <location>
        <position position="352"/>
    </location>
    <ligand>
        <name>Mg(2+)</name>
        <dbReference type="ChEBI" id="CHEBI:18420"/>
        <label>2</label>
    </ligand>
</feature>
<feature type="binding site" evidence="1">
    <location>
        <position position="356"/>
    </location>
    <ligand>
        <name>Mg(2+)</name>
        <dbReference type="ChEBI" id="CHEBI:18420"/>
        <label>1</label>
    </ligand>
</feature>
<feature type="binding site" evidence="1">
    <location>
        <position position="356"/>
    </location>
    <ligand>
        <name>Mg(2+)</name>
        <dbReference type="ChEBI" id="CHEBI:18420"/>
        <label>2</label>
    </ligand>
</feature>
<feature type="binding site" evidence="1">
    <location>
        <position position="497"/>
    </location>
    <ligand>
        <name>Mg(2+)</name>
        <dbReference type="ChEBI" id="CHEBI:18420"/>
        <label>3</label>
    </ligand>
</feature>
<feature type="binding site" evidence="1">
    <location>
        <position position="505"/>
    </location>
    <ligand>
        <name>Mg(2+)</name>
        <dbReference type="ChEBI" id="CHEBI:18420"/>
        <label>3</label>
    </ligand>
</feature>
<proteinExistence type="evidence at protein level"/>
<gene>
    <name type="primary">TPS08</name>
    <name type="ordered locus">At4g20210</name>
    <name type="ORF">F1C12.130</name>
</gene>
<sequence>MEAIKTFSPKFGFQISLSPRTHLTPVRFPPTACPVKPANLVRLKATRALIRDPQESNRKFQKFPPSEWTNRFDSVSVDASEMDALRKEIDKIIPNVKKELMSSQGIESTKKKILMVYLLVSLGLAYHFEDEIEECLKEGFETIEEMMAGEDNLYTISIIFLVLRTYGHHMSSDIFQKFKGNDGNFKGCISGDAKGLLALYEAAQLRTTTEYIMEEALSFTSSNLELLAADGRCPPHLSKHIRNALGLSQHKQMEVLVAVEYISFYEQEKDHDKILLKFAKLNFKLMQLHYLEELKVVTKWYKEHDFASNLPPYFKYVIVENHFFAITMYFEPKFSQKRIMLAKYFTVLVLLDDTCDRYASLSEAESLTNSLERWAPDDAMDKQPHYLKFVFKFIMGCFEEFERELASEGRSYSVKATLEEFKTIVKANFDFAKLAHTGHVPSFKEYMEVGEVEVGVCATLAGNLMCIGHIGDEGVYEWLKSRPKFLKAASTYGRLMNDIAGFEDDMKREYVITGVNTYMKQYGLTKMEAIRELQNLVEYNHTIMNEEFLKTTDLPRQIRKQVINVARSLNVSYTEGEGFTHTKGKVDEYITSLFITPIRI</sequence>
<evidence type="ECO:0000250" key="1"/>
<evidence type="ECO:0000269" key="2">
    <source>
    </source>
</evidence>
<evidence type="ECO:0000305" key="3"/>
<organism>
    <name type="scientific">Arabidopsis thaliana</name>
    <name type="common">Mouse-ear cress</name>
    <dbReference type="NCBI Taxonomy" id="3702"/>
    <lineage>
        <taxon>Eukaryota</taxon>
        <taxon>Viridiplantae</taxon>
        <taxon>Streptophyta</taxon>
        <taxon>Embryophyta</taxon>
        <taxon>Tracheophyta</taxon>
        <taxon>Spermatophyta</taxon>
        <taxon>Magnoliopsida</taxon>
        <taxon>eudicotyledons</taxon>
        <taxon>Gunneridae</taxon>
        <taxon>Pentapetalae</taxon>
        <taxon>rosids</taxon>
        <taxon>malvids</taxon>
        <taxon>Brassicales</taxon>
        <taxon>Brassicaceae</taxon>
        <taxon>Camelineae</taxon>
        <taxon>Arabidopsis</taxon>
    </lineage>
</organism>
<protein>
    <recommendedName>
        <fullName>Terpenoid synthase 8</fullName>
        <shortName>AtTPS08</shortName>
        <ecNumber>4.2.3.195</ecNumber>
    </recommendedName>
</protein>